<accession>Q61096</accession>
<accession>O08809</accession>
<reference key="1">
    <citation type="journal article" date="1998" name="Cytogenet. Cell Genet.">
        <title>Characterization and localization of the genes for mouse proteinase-3 (Prtn3) and neutrophil elastase (Ela2).</title>
        <authorList>
            <person name="Sturrock A."/>
            <person name="Franklin K.F."/>
            <person name="Wu S.-Q."/>
            <person name="Hoidal J.R."/>
        </authorList>
    </citation>
    <scope>NUCLEOTIDE SEQUENCE [GENOMIC DNA]</scope>
    <source>
        <strain>129/SvJ</strain>
    </source>
</reference>
<reference key="2">
    <citation type="journal article" date="1997" name="FEBS Lett.">
        <title>Cloning and functional expression of the murine homologue of proteinase 3: implications for the design of murine models of vasculitis.</title>
        <authorList>
            <person name="Jenne D.E."/>
            <person name="Froehlich L."/>
            <person name="Hummel A.M."/>
            <person name="Specks U."/>
        </authorList>
    </citation>
    <scope>NUCLEOTIDE SEQUENCE [MRNA]</scope>
    <source>
        <strain>129/Sv</strain>
    </source>
</reference>
<reference key="3">
    <citation type="journal article" date="1997" name="Immunogenetics">
        <title>Characterization of cDNA clones encoding mouse proteinase 3 (myeloblastine) and cathepsin G.</title>
        <authorList>
            <person name="Aveskogh M."/>
            <person name="Lutzelschwab C."/>
            <person name="Huang M.R."/>
            <person name="Hellman L."/>
        </authorList>
    </citation>
    <scope>NUCLEOTIDE SEQUENCE [MRNA] OF 2-254</scope>
    <source>
        <strain>BALB/cJ</strain>
    </source>
</reference>
<reference key="4">
    <citation type="journal article" date="2010" name="Cell">
        <title>A tissue-specific atlas of mouse protein phosphorylation and expression.</title>
        <authorList>
            <person name="Huttlin E.L."/>
            <person name="Jedrychowski M.P."/>
            <person name="Elias J.E."/>
            <person name="Goswami T."/>
            <person name="Rad R."/>
            <person name="Beausoleil S.A."/>
            <person name="Villen J."/>
            <person name="Haas W."/>
            <person name="Sowa M.E."/>
            <person name="Gygi S.P."/>
        </authorList>
    </citation>
    <scope>IDENTIFICATION BY MASS SPECTROMETRY [LARGE SCALE ANALYSIS]</scope>
    <source>
        <tissue>Spleen</tissue>
    </source>
</reference>
<feature type="signal peptide" evidence="1">
    <location>
        <begin position="1"/>
        <end position="27"/>
    </location>
</feature>
<feature type="propeptide" id="PRO_0000027710" evidence="1">
    <location>
        <begin position="28"/>
        <end position="29"/>
    </location>
</feature>
<feature type="chain" id="PRO_0000027711" description="Myeloblastin">
    <location>
        <begin position="30"/>
        <end position="250"/>
    </location>
</feature>
<feature type="propeptide" id="PRO_0000027712" evidence="1">
    <location>
        <begin position="251"/>
        <end position="254"/>
    </location>
</feature>
<feature type="domain" description="Peptidase S1" evidence="4">
    <location>
        <begin position="30"/>
        <end position="250"/>
    </location>
</feature>
<feature type="active site" description="Charge relay system" evidence="4">
    <location>
        <position position="73"/>
    </location>
</feature>
<feature type="active site" description="Charge relay system" evidence="4">
    <location>
        <position position="120"/>
    </location>
</feature>
<feature type="active site" description="Charge relay system" evidence="4">
    <location>
        <position position="205"/>
    </location>
</feature>
<feature type="glycosylation site" description="N-linked (GlcNAc...) asparagine" evidence="3">
    <location>
        <position position="127"/>
    </location>
</feature>
<feature type="glycosylation site" description="N-linked (GlcNAc...) asparagine" evidence="3">
    <location>
        <position position="176"/>
    </location>
</feature>
<feature type="disulfide bond" evidence="4">
    <location>
        <begin position="58"/>
        <end position="74"/>
    </location>
</feature>
<feature type="disulfide bond" evidence="4">
    <location>
        <begin position="154"/>
        <end position="211"/>
    </location>
</feature>
<feature type="disulfide bond" evidence="4">
    <location>
        <begin position="184"/>
        <end position="190"/>
    </location>
</feature>
<feature type="disulfide bond" evidence="4">
    <location>
        <begin position="201"/>
        <end position="226"/>
    </location>
</feature>
<feature type="sequence conflict" description="In Ref. 2; AAB58055." evidence="5" ref="2">
    <original>S</original>
    <variation>A</variation>
    <location>
        <position position="2"/>
    </location>
</feature>
<organism>
    <name type="scientific">Mus musculus</name>
    <name type="common">Mouse</name>
    <dbReference type="NCBI Taxonomy" id="10090"/>
    <lineage>
        <taxon>Eukaryota</taxon>
        <taxon>Metazoa</taxon>
        <taxon>Chordata</taxon>
        <taxon>Craniata</taxon>
        <taxon>Vertebrata</taxon>
        <taxon>Euteleostomi</taxon>
        <taxon>Mammalia</taxon>
        <taxon>Eutheria</taxon>
        <taxon>Euarchontoglires</taxon>
        <taxon>Glires</taxon>
        <taxon>Rodentia</taxon>
        <taxon>Myomorpha</taxon>
        <taxon>Muroidea</taxon>
        <taxon>Muridae</taxon>
        <taxon>Murinae</taxon>
        <taxon>Mus</taxon>
        <taxon>Mus</taxon>
    </lineage>
</organism>
<proteinExistence type="evidence at protein level"/>
<comment type="function">
    <text evidence="2">Serine protease that degrades elastin, fibronectin, laminin, vitronectin, and collagen types I, III, and IV (in vitro). By cleaving and activating receptor F2RL1/PAR-2, enhances endothelial cell barrier function and thus vascular integrity during neutrophil transendothelial migration. May play a role in neutrophil transendothelial migration, probably when associated with CD177. Triggers inflammatory processes in neutrophils by interacting with ADGRG3 upstream of F2RL1/PAR2 activation.</text>
</comment>
<comment type="catalytic activity">
    <reaction evidence="2">
        <text>Hydrolysis of proteins, including elastin, by preferential cleavage: -Ala-|-Xaa- &gt; -Val-|-Xaa-.</text>
        <dbReference type="EC" id="3.4.21.76"/>
    </reaction>
</comment>
<comment type="subunit">
    <text evidence="2">May form dimers. Interacts with CD177; the interaction tethers PRTN3 to the cell surface; the interaction is direct. Interacts with SERPINB1. Interacts with ADGRG3.</text>
</comment>
<comment type="subcellular location">
    <subcellularLocation>
        <location evidence="2">Lysosome</location>
    </subcellularLocation>
    <subcellularLocation>
        <location evidence="2">Secreted</location>
    </subcellularLocation>
    <subcellularLocation>
        <location evidence="2">Cell membrane</location>
        <topology evidence="2">Peripheral membrane protein</topology>
        <orientation evidence="2">Extracellular side</orientation>
    </subcellularLocation>
    <subcellularLocation>
        <location evidence="2">Membrane raft</location>
        <topology evidence="2">Peripheral membrane protein</topology>
        <orientation evidence="2">Extracellular side</orientation>
    </subcellularLocation>
    <text evidence="2">Localizes predominantly to azurophil granules (primary secretory granules) in neutrophils. Secreted upon neutrophil stimulation by TNF-alpha, lipopolysaccharide (LPS), fMLP and CXCL8/IL8 or during neutrophil transmigration. Following secretion tethered to the cell membrane by CD177.</text>
</comment>
<comment type="similarity">
    <text evidence="4">Belongs to the peptidase S1 family. Elastase subfamily.</text>
</comment>
<evidence type="ECO:0000250" key="1"/>
<evidence type="ECO:0000250" key="2">
    <source>
        <dbReference type="UniProtKB" id="P24158"/>
    </source>
</evidence>
<evidence type="ECO:0000255" key="3"/>
<evidence type="ECO:0000255" key="4">
    <source>
        <dbReference type="PROSITE-ProRule" id="PRU00274"/>
    </source>
</evidence>
<evidence type="ECO:0000305" key="5"/>
<dbReference type="EC" id="3.4.21.76"/>
<dbReference type="EMBL" id="AF082186">
    <property type="protein sequence ID" value="AAC79701.1"/>
    <property type="molecule type" value="Genomic_DNA"/>
</dbReference>
<dbReference type="EMBL" id="U97073">
    <property type="protein sequence ID" value="AAB58055.1"/>
    <property type="molecule type" value="mRNA"/>
</dbReference>
<dbReference type="EMBL" id="U43525">
    <property type="protein sequence ID" value="AAB67271.1"/>
    <property type="molecule type" value="mRNA"/>
</dbReference>
<dbReference type="CCDS" id="CCDS23993.1"/>
<dbReference type="RefSeq" id="NP_035308.2">
    <property type="nucleotide sequence ID" value="NM_011178.2"/>
</dbReference>
<dbReference type="SMR" id="Q61096"/>
<dbReference type="FunCoup" id="Q61096">
    <property type="interactions" value="138"/>
</dbReference>
<dbReference type="STRING" id="10090.ENSMUSP00000006679"/>
<dbReference type="BindingDB" id="Q61096"/>
<dbReference type="ChEMBL" id="CHEMBL5384"/>
<dbReference type="MEROPS" id="S01.134"/>
<dbReference type="GlyCosmos" id="Q61096">
    <property type="glycosylation" value="2 sites, No reported glycans"/>
</dbReference>
<dbReference type="GlyGen" id="Q61096">
    <property type="glycosylation" value="2 sites"/>
</dbReference>
<dbReference type="CPTAC" id="non-CPTAC-3494"/>
<dbReference type="jPOST" id="Q61096"/>
<dbReference type="PaxDb" id="10090-ENSMUSP00000006679"/>
<dbReference type="PeptideAtlas" id="Q61096"/>
<dbReference type="ProteomicsDB" id="291826"/>
<dbReference type="DNASU" id="19152"/>
<dbReference type="GeneID" id="19152"/>
<dbReference type="KEGG" id="mmu:19152"/>
<dbReference type="UCSC" id="uc007gah.1">
    <property type="organism name" value="mouse"/>
</dbReference>
<dbReference type="AGR" id="MGI:893580"/>
<dbReference type="CTD" id="5657"/>
<dbReference type="MGI" id="MGI:893580">
    <property type="gene designation" value="Prtn3"/>
</dbReference>
<dbReference type="eggNOG" id="KOG3627">
    <property type="taxonomic scope" value="Eukaryota"/>
</dbReference>
<dbReference type="InParanoid" id="Q61096"/>
<dbReference type="OrthoDB" id="49502at9989"/>
<dbReference type="PhylomeDB" id="Q61096"/>
<dbReference type="TreeFam" id="TF335284"/>
<dbReference type="BRENDA" id="3.4.21.76">
    <property type="organism ID" value="3474"/>
</dbReference>
<dbReference type="Reactome" id="R-MMU-140875">
    <property type="pathway name" value="Common Pathway of Fibrin Clot Formation"/>
</dbReference>
<dbReference type="Reactome" id="R-MMU-6798695">
    <property type="pathway name" value="Neutrophil degranulation"/>
</dbReference>
<dbReference type="Reactome" id="R-MMU-6803157">
    <property type="pathway name" value="Antimicrobial peptides"/>
</dbReference>
<dbReference type="BioGRID-ORCS" id="19152">
    <property type="hits" value="2 hits in 77 CRISPR screens"/>
</dbReference>
<dbReference type="ChiTaRS" id="Prtn3">
    <property type="organism name" value="mouse"/>
</dbReference>
<dbReference type="PRO" id="PR:Q61096"/>
<dbReference type="Proteomes" id="UP000000589">
    <property type="component" value="Unplaced"/>
</dbReference>
<dbReference type="RNAct" id="Q61096">
    <property type="molecule type" value="protein"/>
</dbReference>
<dbReference type="GO" id="GO:0005576">
    <property type="term" value="C:extracellular region"/>
    <property type="evidence" value="ECO:0007669"/>
    <property type="project" value="UniProtKB-SubCell"/>
</dbReference>
<dbReference type="GO" id="GO:0005764">
    <property type="term" value="C:lysosome"/>
    <property type="evidence" value="ECO:0007669"/>
    <property type="project" value="UniProtKB-SubCell"/>
</dbReference>
<dbReference type="GO" id="GO:0045121">
    <property type="term" value="C:membrane raft"/>
    <property type="evidence" value="ECO:0007669"/>
    <property type="project" value="UniProtKB-SubCell"/>
</dbReference>
<dbReference type="GO" id="GO:0005886">
    <property type="term" value="C:plasma membrane"/>
    <property type="evidence" value="ECO:0007669"/>
    <property type="project" value="UniProtKB-SubCell"/>
</dbReference>
<dbReference type="GO" id="GO:0004252">
    <property type="term" value="F:serine-type endopeptidase activity"/>
    <property type="evidence" value="ECO:0007669"/>
    <property type="project" value="InterPro"/>
</dbReference>
<dbReference type="GO" id="GO:0030574">
    <property type="term" value="P:collagen catabolic process"/>
    <property type="evidence" value="ECO:0007669"/>
    <property type="project" value="UniProtKB-KW"/>
</dbReference>
<dbReference type="GO" id="GO:0006508">
    <property type="term" value="P:proteolysis"/>
    <property type="evidence" value="ECO:0007669"/>
    <property type="project" value="UniProtKB-KW"/>
</dbReference>
<dbReference type="CDD" id="cd00190">
    <property type="entry name" value="Tryp_SPc"/>
    <property type="match status" value="1"/>
</dbReference>
<dbReference type="FunFam" id="2.40.10.10:FF:000052">
    <property type="entry name" value="Neutrophil elastase"/>
    <property type="match status" value="1"/>
</dbReference>
<dbReference type="FunFam" id="2.40.10.10:FF:000068">
    <property type="entry name" value="transmembrane protease serine 2"/>
    <property type="match status" value="1"/>
</dbReference>
<dbReference type="Gene3D" id="2.40.10.10">
    <property type="entry name" value="Trypsin-like serine proteases"/>
    <property type="match status" value="2"/>
</dbReference>
<dbReference type="InterPro" id="IPR050850">
    <property type="entry name" value="Peptidase_S1_Elastase_sf"/>
</dbReference>
<dbReference type="InterPro" id="IPR009003">
    <property type="entry name" value="Peptidase_S1_PA"/>
</dbReference>
<dbReference type="InterPro" id="IPR043504">
    <property type="entry name" value="Peptidase_S1_PA_chymotrypsin"/>
</dbReference>
<dbReference type="InterPro" id="IPR001314">
    <property type="entry name" value="Peptidase_S1A"/>
</dbReference>
<dbReference type="InterPro" id="IPR001254">
    <property type="entry name" value="Trypsin_dom"/>
</dbReference>
<dbReference type="InterPro" id="IPR018114">
    <property type="entry name" value="TRYPSIN_HIS"/>
</dbReference>
<dbReference type="InterPro" id="IPR033116">
    <property type="entry name" value="TRYPSIN_SER"/>
</dbReference>
<dbReference type="PANTHER" id="PTHR24257">
    <property type="entry name" value="CHYMOTRYPSIN-LIKE ELASTASE FAMILY MEMBER"/>
    <property type="match status" value="1"/>
</dbReference>
<dbReference type="PANTHER" id="PTHR24257:SF15">
    <property type="entry name" value="MYELOBLASTIN"/>
    <property type="match status" value="1"/>
</dbReference>
<dbReference type="Pfam" id="PF00089">
    <property type="entry name" value="Trypsin"/>
    <property type="match status" value="1"/>
</dbReference>
<dbReference type="PRINTS" id="PR00722">
    <property type="entry name" value="CHYMOTRYPSIN"/>
</dbReference>
<dbReference type="SMART" id="SM00020">
    <property type="entry name" value="Tryp_SPc"/>
    <property type="match status" value="1"/>
</dbReference>
<dbReference type="SUPFAM" id="SSF50494">
    <property type="entry name" value="Trypsin-like serine proteases"/>
    <property type="match status" value="1"/>
</dbReference>
<dbReference type="PROSITE" id="PS50240">
    <property type="entry name" value="TRYPSIN_DOM"/>
    <property type="match status" value="1"/>
</dbReference>
<dbReference type="PROSITE" id="PS00134">
    <property type="entry name" value="TRYPSIN_HIS"/>
    <property type="match status" value="1"/>
</dbReference>
<dbReference type="PROSITE" id="PS00135">
    <property type="entry name" value="TRYPSIN_SER"/>
    <property type="match status" value="1"/>
</dbReference>
<keyword id="KW-1003">Cell membrane</keyword>
<keyword id="KW-0177">Collagen degradation</keyword>
<keyword id="KW-1015">Disulfide bond</keyword>
<keyword id="KW-0325">Glycoprotein</keyword>
<keyword id="KW-0378">Hydrolase</keyword>
<keyword id="KW-0458">Lysosome</keyword>
<keyword id="KW-0472">Membrane</keyword>
<keyword id="KW-0645">Protease</keyword>
<keyword id="KW-1185">Reference proteome</keyword>
<keyword id="KW-0964">Secreted</keyword>
<keyword id="KW-0720">Serine protease</keyword>
<keyword id="KW-0732">Signal</keyword>
<keyword id="KW-0865">Zymogen</keyword>
<gene>
    <name type="primary">Prtn3</name>
</gene>
<sequence length="254" mass="27626">MSGSYPSPKGIHPFLLLALVVGGAVQASKIVGGHEARPHSRPYVASLQLSRFPGSHFCGGTLIHPRFVLTAAHCLQDISWQLVTVVLGAHDLLSSEPEQQKFTISQVFQNNYNPEENLNDVLLLQLNRTASLGKEVAVASLPQQDQTLSQGTQCLAMGWGRLGTQAPTPRVLQELNVTVVTFLCREHNVCTLVPRRAAGICFGDSGGPLICNGILHGVDSFVIRECASLQFPDFFARVSMYVDWIQNVLRGAEP</sequence>
<name>PRTN3_MOUSE</name>
<protein>
    <recommendedName>
        <fullName>Myeloblastin</fullName>
        <ecNumber>3.4.21.76</ecNumber>
    </recommendedName>
    <alternativeName>
        <fullName>Proteinase 3</fullName>
        <shortName>PR-3</shortName>
    </alternativeName>
</protein>